<gene>
    <name evidence="4" type="primary">cle6</name>
</gene>
<dbReference type="EC" id="2.5.1.-" evidence="3"/>
<dbReference type="EC" id="2.5.1.1" evidence="1"/>
<dbReference type="EC" id="2.5.1.29" evidence="1"/>
<dbReference type="EC" id="2.5.1.10" evidence="1"/>
<dbReference type="EMBL" id="LC422695">
    <property type="protein sequence ID" value="BBG28476.1"/>
    <property type="molecule type" value="Genomic_DNA"/>
</dbReference>
<dbReference type="SMR" id="A0A3S5XFG0"/>
<dbReference type="VEuPathDB" id="FungiDB:ASPVEDRAFT_78269"/>
<dbReference type="UniPathway" id="UPA00213"/>
<dbReference type="GO" id="GO:0046872">
    <property type="term" value="F:metal ion binding"/>
    <property type="evidence" value="ECO:0007669"/>
    <property type="project" value="UniProtKB-KW"/>
</dbReference>
<dbReference type="GO" id="GO:0004659">
    <property type="term" value="F:prenyltransferase activity"/>
    <property type="evidence" value="ECO:0007669"/>
    <property type="project" value="InterPro"/>
</dbReference>
<dbReference type="GO" id="GO:0046165">
    <property type="term" value="P:alcohol biosynthetic process"/>
    <property type="evidence" value="ECO:0007669"/>
    <property type="project" value="UniProtKB-ARBA"/>
</dbReference>
<dbReference type="GO" id="GO:0008299">
    <property type="term" value="P:isoprenoid biosynthetic process"/>
    <property type="evidence" value="ECO:0007669"/>
    <property type="project" value="InterPro"/>
</dbReference>
<dbReference type="GO" id="GO:0043386">
    <property type="term" value="P:mycotoxin biosynthetic process"/>
    <property type="evidence" value="ECO:0007669"/>
    <property type="project" value="UniProtKB-ARBA"/>
</dbReference>
<dbReference type="CDD" id="cd00685">
    <property type="entry name" value="Trans_IPPS_HT"/>
    <property type="match status" value="1"/>
</dbReference>
<dbReference type="Gene3D" id="1.10.600.10">
    <property type="entry name" value="Farnesyl Diphosphate Synthase"/>
    <property type="match status" value="1"/>
</dbReference>
<dbReference type="InterPro" id="IPR008949">
    <property type="entry name" value="Isoprenoid_synthase_dom_sf"/>
</dbReference>
<dbReference type="InterPro" id="IPR000092">
    <property type="entry name" value="Polyprenyl_synt"/>
</dbReference>
<dbReference type="InterPro" id="IPR033749">
    <property type="entry name" value="Polyprenyl_synt_CS"/>
</dbReference>
<dbReference type="PANTHER" id="PTHR12001">
    <property type="entry name" value="GERANYLGERANYL PYROPHOSPHATE SYNTHASE"/>
    <property type="match status" value="1"/>
</dbReference>
<dbReference type="PANTHER" id="PTHR12001:SF70">
    <property type="entry name" value="PYROPHOSPHATE SYNTHETASE ATMG, PUTATIVE (AFU_ORTHOLOGUE AFUA_8G02400)-RELATED"/>
    <property type="match status" value="1"/>
</dbReference>
<dbReference type="Pfam" id="PF00348">
    <property type="entry name" value="polyprenyl_synt"/>
    <property type="match status" value="1"/>
</dbReference>
<dbReference type="SFLD" id="SFLDS00005">
    <property type="entry name" value="Isoprenoid_Synthase_Type_I"/>
    <property type="match status" value="1"/>
</dbReference>
<dbReference type="SUPFAM" id="SSF48576">
    <property type="entry name" value="Terpenoid synthases"/>
    <property type="match status" value="1"/>
</dbReference>
<dbReference type="PROSITE" id="PS00723">
    <property type="entry name" value="POLYPRENYL_SYNTHASE_1"/>
    <property type="match status" value="1"/>
</dbReference>
<dbReference type="PROSITE" id="PS00444">
    <property type="entry name" value="POLYPRENYL_SYNTHASE_2"/>
    <property type="match status" value="1"/>
</dbReference>
<proteinExistence type="evidence at protein level"/>
<comment type="function">
    <text evidence="3">Geranylgeranyl pyrophosphate synthase; part of the cluster A that mediates the biosynthesis of chevalone E and its oxidized derivatives that possess a unique five-membered lactone ring and can synergistically enhance the cytotoxicity of doxorubicin (DOX) in breast cancer cells (Ref.1). Within the pathway, cle6 takes part to the biosynthesis of the molecular scaffold by providing geranylgeranyl pyrophosphate (GGPP) to the prenyltransferase cle5 for C-3 geranylgeranylation of triacetic acid lactone (Ref.1). The molecular scaffold is commonly biosynthesized by a series of enzymes including the non-reducing polyketide synthase (NR-PKS) cle1 that produces the alpha-pyrone triacetic acid lactone (TAL); The membrane-bound prenyltransferase cle5 that accepts TAL as its substrate to perform a C-3 geranylgeranylation reaction, in which the pathway-dedicated GGPS cle6 is required to provide GGPP, the other substrate of cle5; the FAD-dependent monooxygenase Cle3 that forms an (S)-epoxide ring at the terminal olefin of the geranylgeranyl group; and the terpene cyclase Cle7 that catalyzes the cyclization of the prenyl group that yields the pentacyclic pathway intermediate chevalone E (Ref.1). Chevalone E can derivatize into seven new oxidized analogs by the cytochrome P450 monooxygenases cle2 (acting at C-20) and cle4 (acting at C-11 and C-12) (Ref.1).</text>
</comment>
<comment type="catalytic activity">
    <reaction evidence="1">
        <text>isopentenyl diphosphate + dimethylallyl diphosphate = (2E)-geranyl diphosphate + diphosphate</text>
        <dbReference type="Rhea" id="RHEA:22408"/>
        <dbReference type="ChEBI" id="CHEBI:33019"/>
        <dbReference type="ChEBI" id="CHEBI:57623"/>
        <dbReference type="ChEBI" id="CHEBI:58057"/>
        <dbReference type="ChEBI" id="CHEBI:128769"/>
        <dbReference type="EC" id="2.5.1.1"/>
    </reaction>
</comment>
<comment type="catalytic activity">
    <reaction evidence="1">
        <text>isopentenyl diphosphate + (2E)-geranyl diphosphate = (2E,6E)-farnesyl diphosphate + diphosphate</text>
        <dbReference type="Rhea" id="RHEA:19361"/>
        <dbReference type="ChEBI" id="CHEBI:33019"/>
        <dbReference type="ChEBI" id="CHEBI:58057"/>
        <dbReference type="ChEBI" id="CHEBI:128769"/>
        <dbReference type="ChEBI" id="CHEBI:175763"/>
        <dbReference type="EC" id="2.5.1.10"/>
    </reaction>
</comment>
<comment type="catalytic activity">
    <reaction evidence="1">
        <text>isopentenyl diphosphate + (2E,6E)-farnesyl diphosphate = (2E,6E,10E)-geranylgeranyl diphosphate + diphosphate</text>
        <dbReference type="Rhea" id="RHEA:17653"/>
        <dbReference type="ChEBI" id="CHEBI:33019"/>
        <dbReference type="ChEBI" id="CHEBI:58756"/>
        <dbReference type="ChEBI" id="CHEBI:128769"/>
        <dbReference type="ChEBI" id="CHEBI:175763"/>
        <dbReference type="EC" id="2.5.1.29"/>
    </reaction>
</comment>
<comment type="cofactor">
    <cofactor evidence="1">
        <name>Mg(2+)</name>
        <dbReference type="ChEBI" id="CHEBI:18420"/>
    </cofactor>
    <text evidence="1">Binds 3 Mg(2+) ions per subunit.</text>
</comment>
<comment type="pathway">
    <text evidence="3">Secondary metabolite biosynthesis; terpenoid biosynthesis.</text>
</comment>
<comment type="biotechnology">
    <text evidence="3">Chevalone E derivatives produced by this cluster are interesting candidates for cancer therapy since they synergistically enhance the cytotoxicity of doxorubicin (DOX) in both MDA-MB-231 and MCF-7 breast cancer cell lines.</text>
</comment>
<comment type="similarity">
    <text evidence="5">Belongs to the FPP/GGPP synthase family.</text>
</comment>
<sequence length="380" mass="42725">MHSVRTSTTSTSSMVSSTMHPFDAFNAPQPYQQHHPPRWNIHNPHFSQTNGHSIQKTPSMIKLHSSEGTVPTTNGADTLHQRNMEEKIISAPLHYITGLPGKDIRGKLISAFNEWFRIPDEQLEIIKRVVGLLHVASLLIDDIEDSSKLRRGFPVAHSIFGIPQTINSANYAYFQAQSEVLKLRNCNAAFTIFTEELLRLHRGQGMDLYWRDSLTCPTEEEYLDMVANKTGGLFRLAIKLIQLESDVEDDCVPLVDLLGIIFQIRDDYQNLQNEQYAKNKGFAEDITEGKFSYPIVHSIRSGAANCSSGSSELMNILRQKTDDEAVKRYTICILEKTGSFEYTRRKLTELMAAARAMLAEFGSAEAAGLGGILDFLELKE</sequence>
<evidence type="ECO:0000250" key="1">
    <source>
        <dbReference type="UniProtKB" id="Q12051"/>
    </source>
</evidence>
<evidence type="ECO:0000256" key="2">
    <source>
        <dbReference type="SAM" id="MobiDB-lite"/>
    </source>
</evidence>
<evidence type="ECO:0000269" key="3">
    <source ref="1"/>
</evidence>
<evidence type="ECO:0000303" key="4">
    <source ref="1"/>
</evidence>
<evidence type="ECO:0000305" key="5"/>
<reference key="1">
    <citation type="journal article" date="2019" name="Org. Chem. Front.">
        <title>Genome mining for fungal polyketide-diterpenoid hybrids: discovery of key terpene cyclases and multifunctional P450s for structural diversification.</title>
        <authorList>
            <person name="Wang W.G."/>
            <person name="Du L.Q."/>
            <person name="Sheng S.L."/>
            <person name="Li A."/>
            <person name="Li Y.P."/>
            <person name="Cheng G.G."/>
            <person name="Li G.P."/>
            <person name="Sun G."/>
            <person name="Hu Q."/>
            <person name="Matsuda Y."/>
        </authorList>
    </citation>
    <scope>NUCLEOTIDE SEQUENCE [GENOMIC DNA]</scope>
    <scope>FUNCTION</scope>
    <scope>CATALYTIC ACTIVITY</scope>
    <scope>PATHWAY</scope>
    <scope>BIOTECHNOLOGY</scope>
    <source>
        <strain>0312</strain>
    </source>
</reference>
<organism>
    <name type="scientific">Aspergillus versicolor</name>
    <dbReference type="NCBI Taxonomy" id="46472"/>
    <lineage>
        <taxon>Eukaryota</taxon>
        <taxon>Fungi</taxon>
        <taxon>Dikarya</taxon>
        <taxon>Ascomycota</taxon>
        <taxon>Pezizomycotina</taxon>
        <taxon>Eurotiomycetes</taxon>
        <taxon>Eurotiomycetidae</taxon>
        <taxon>Eurotiales</taxon>
        <taxon>Aspergillaceae</taxon>
        <taxon>Aspergillus</taxon>
        <taxon>Aspergillus subgen. Nidulantes</taxon>
    </lineage>
</organism>
<protein>
    <recommendedName>
        <fullName evidence="4">Geranylgeranyl pyrophosphate synthase cle6</fullName>
        <shortName evidence="5">GGPP synthase</shortName>
        <shortName evidence="5">GGPPSase</shortName>
        <ecNumber evidence="3">2.5.1.-</ecNumber>
    </recommendedName>
    <alternativeName>
        <fullName evidence="1">(2E,6E)-farnesyl diphosphate synthase</fullName>
    </alternativeName>
    <alternativeName>
        <fullName evidence="1">15-deoxyoxalicine B biosynthesis cluster protein C</fullName>
    </alternativeName>
    <alternativeName>
        <fullName evidence="1">Dimethylallyltranstransferase</fullName>
        <ecNumber evidence="1">2.5.1.1</ecNumber>
    </alternativeName>
    <alternativeName>
        <fullName evidence="4">Diterpenoid pyrone biosynthesis cluster protein D</fullName>
    </alternativeName>
    <alternativeName>
        <fullName evidence="1">Farnesyl diphosphate synthase</fullName>
    </alternativeName>
    <alternativeName>
        <fullName evidence="1">Farnesyltranstransferase</fullName>
        <ecNumber evidence="1">2.5.1.29</ecNumber>
    </alternativeName>
    <alternativeName>
        <fullName evidence="1">Geranylgeranyl diphosphate synthase</fullName>
    </alternativeName>
    <alternativeName>
        <fullName evidence="1">Geranyltranstransferase</fullName>
        <ecNumber evidence="1">2.5.1.10</ecNumber>
    </alternativeName>
</protein>
<feature type="chain" id="PRO_0000461048" description="Geranylgeranyl pyrophosphate synthase cle6">
    <location>
        <begin position="1"/>
        <end position="380"/>
    </location>
</feature>
<feature type="region of interest" description="Disordered" evidence="2">
    <location>
        <begin position="1"/>
        <end position="55"/>
    </location>
</feature>
<feature type="compositionally biased region" description="Low complexity" evidence="2">
    <location>
        <begin position="1"/>
        <end position="19"/>
    </location>
</feature>
<feature type="compositionally biased region" description="Polar residues" evidence="2">
    <location>
        <begin position="45"/>
        <end position="55"/>
    </location>
</feature>
<feature type="binding site" evidence="1">
    <location>
        <position position="102"/>
    </location>
    <ligand>
        <name>isopentenyl diphosphate</name>
        <dbReference type="ChEBI" id="CHEBI:128769"/>
    </ligand>
</feature>
<feature type="binding site" evidence="1">
    <location>
        <position position="105"/>
    </location>
    <ligand>
        <name>isopentenyl diphosphate</name>
        <dbReference type="ChEBI" id="CHEBI:128769"/>
    </ligand>
</feature>
<feature type="binding site" evidence="1">
    <location>
        <position position="134"/>
    </location>
    <ligand>
        <name>isopentenyl diphosphate</name>
        <dbReference type="ChEBI" id="CHEBI:128769"/>
    </ligand>
</feature>
<feature type="binding site" evidence="1">
    <location>
        <position position="141"/>
    </location>
    <ligand>
        <name>Mg(2+)</name>
        <dbReference type="ChEBI" id="CHEBI:18420"/>
        <label>1</label>
    </ligand>
</feature>
<feature type="binding site" evidence="1">
    <location>
        <position position="141"/>
    </location>
    <ligand>
        <name>Mg(2+)</name>
        <dbReference type="ChEBI" id="CHEBI:18420"/>
        <label>2</label>
    </ligand>
</feature>
<feature type="binding site" evidence="1">
    <location>
        <position position="145"/>
    </location>
    <ligand>
        <name>Mg(2+)</name>
        <dbReference type="ChEBI" id="CHEBI:18420"/>
        <label>1</label>
    </ligand>
</feature>
<feature type="binding site" evidence="1">
    <location>
        <position position="145"/>
    </location>
    <ligand>
        <name>Mg(2+)</name>
        <dbReference type="ChEBI" id="CHEBI:18420"/>
        <label>2</label>
    </ligand>
</feature>
<feature type="binding site" evidence="1">
    <location>
        <position position="150"/>
    </location>
    <ligand>
        <name>dimethylallyl diphosphate</name>
        <dbReference type="ChEBI" id="CHEBI:57623"/>
    </ligand>
</feature>
<feature type="binding site" evidence="1">
    <location>
        <position position="151"/>
    </location>
    <ligand>
        <name>isopentenyl diphosphate</name>
        <dbReference type="ChEBI" id="CHEBI:128769"/>
    </ligand>
</feature>
<feature type="binding site" evidence="1">
    <location>
        <position position="229"/>
    </location>
    <ligand>
        <name>dimethylallyl diphosphate</name>
        <dbReference type="ChEBI" id="CHEBI:57623"/>
    </ligand>
</feature>
<feature type="binding site" evidence="1">
    <location>
        <position position="230"/>
    </location>
    <ligand>
        <name>dimethylallyl diphosphate</name>
        <dbReference type="ChEBI" id="CHEBI:57623"/>
    </ligand>
</feature>
<feature type="binding site" evidence="1">
    <location>
        <position position="263"/>
    </location>
    <ligand>
        <name>dimethylallyl diphosphate</name>
        <dbReference type="ChEBI" id="CHEBI:57623"/>
    </ligand>
</feature>
<feature type="binding site" evidence="1">
    <location>
        <position position="266"/>
    </location>
    <ligand>
        <name>Mg(2+)</name>
        <dbReference type="ChEBI" id="CHEBI:18420"/>
        <label>3</label>
    </ligand>
</feature>
<feature type="binding site" evidence="1">
    <location>
        <position position="270"/>
    </location>
    <ligand>
        <name>dimethylallyl diphosphate</name>
        <dbReference type="ChEBI" id="CHEBI:57623"/>
    </ligand>
</feature>
<feature type="binding site" evidence="1">
    <location>
        <position position="280"/>
    </location>
    <ligand>
        <name>dimethylallyl diphosphate</name>
        <dbReference type="ChEBI" id="CHEBI:57623"/>
    </ligand>
</feature>
<feature type="binding site" evidence="1">
    <location>
        <position position="290"/>
    </location>
    <ligand>
        <name>dimethylallyl diphosphate</name>
        <dbReference type="ChEBI" id="CHEBI:57623"/>
    </ligand>
</feature>
<name>CLE6_ASPVE</name>
<keyword id="KW-0460">Magnesium</keyword>
<keyword id="KW-0479">Metal-binding</keyword>
<keyword id="KW-0808">Transferase</keyword>
<accession>A0A3S5XFG0</accession>